<proteinExistence type="inferred from homology"/>
<accession>A9CIB0</accession>
<evidence type="ECO:0000255" key="1">
    <source>
        <dbReference type="HAMAP-Rule" id="MF_00911"/>
    </source>
</evidence>
<evidence type="ECO:0000255" key="2">
    <source>
        <dbReference type="PROSITE-ProRule" id="PRU01115"/>
    </source>
</evidence>
<keyword id="KW-0131">Cell cycle</keyword>
<keyword id="KW-0132">Cell division</keyword>
<keyword id="KW-0997">Cell inner membrane</keyword>
<keyword id="KW-1003">Cell membrane</keyword>
<keyword id="KW-0472">Membrane</keyword>
<keyword id="KW-1185">Reference proteome</keyword>
<keyword id="KW-0812">Transmembrane</keyword>
<keyword id="KW-1133">Transmembrane helix</keyword>
<feature type="chain" id="PRO_0000414655" description="Cell division protein FtsQ">
    <location>
        <begin position="1"/>
        <end position="317"/>
    </location>
</feature>
<feature type="topological domain" description="Cytoplasmic" evidence="1">
    <location>
        <begin position="1"/>
        <end position="63"/>
    </location>
</feature>
<feature type="transmembrane region" description="Helical" evidence="1">
    <location>
        <begin position="64"/>
        <end position="82"/>
    </location>
</feature>
<feature type="topological domain" description="Periplasmic" evidence="1">
    <location>
        <begin position="83"/>
        <end position="317"/>
    </location>
</feature>
<feature type="domain" description="POTRA" evidence="2">
    <location>
        <begin position="97"/>
        <end position="165"/>
    </location>
</feature>
<organism>
    <name type="scientific">Agrobacterium fabrum (strain C58 / ATCC 33970)</name>
    <name type="common">Agrobacterium tumefaciens (strain C58)</name>
    <dbReference type="NCBI Taxonomy" id="176299"/>
    <lineage>
        <taxon>Bacteria</taxon>
        <taxon>Pseudomonadati</taxon>
        <taxon>Pseudomonadota</taxon>
        <taxon>Alphaproteobacteria</taxon>
        <taxon>Hyphomicrobiales</taxon>
        <taxon>Rhizobiaceae</taxon>
        <taxon>Rhizobium/Agrobacterium group</taxon>
        <taxon>Agrobacterium</taxon>
        <taxon>Agrobacterium tumefaciens complex</taxon>
    </lineage>
</organism>
<protein>
    <recommendedName>
        <fullName evidence="1">Cell division protein FtsQ</fullName>
    </recommendedName>
</protein>
<gene>
    <name evidence="1" type="primary">ftsQ</name>
    <name type="ordered locus">Atu2088</name>
</gene>
<reference key="1">
    <citation type="journal article" date="2001" name="Science">
        <title>The genome of the natural genetic engineer Agrobacterium tumefaciens C58.</title>
        <authorList>
            <person name="Wood D.W."/>
            <person name="Setubal J.C."/>
            <person name="Kaul R."/>
            <person name="Monks D.E."/>
            <person name="Kitajima J.P."/>
            <person name="Okura V.K."/>
            <person name="Zhou Y."/>
            <person name="Chen L."/>
            <person name="Wood G.E."/>
            <person name="Almeida N.F. Jr."/>
            <person name="Woo L."/>
            <person name="Chen Y."/>
            <person name="Paulsen I.T."/>
            <person name="Eisen J.A."/>
            <person name="Karp P.D."/>
            <person name="Bovee D. Sr."/>
            <person name="Chapman P."/>
            <person name="Clendenning J."/>
            <person name="Deatherage G."/>
            <person name="Gillet W."/>
            <person name="Grant C."/>
            <person name="Kutyavin T."/>
            <person name="Levy R."/>
            <person name="Li M.-J."/>
            <person name="McClelland E."/>
            <person name="Palmieri A."/>
            <person name="Raymond C."/>
            <person name="Rouse G."/>
            <person name="Saenphimmachak C."/>
            <person name="Wu Z."/>
            <person name="Romero P."/>
            <person name="Gordon D."/>
            <person name="Zhang S."/>
            <person name="Yoo H."/>
            <person name="Tao Y."/>
            <person name="Biddle P."/>
            <person name="Jung M."/>
            <person name="Krespan W."/>
            <person name="Perry M."/>
            <person name="Gordon-Kamm B."/>
            <person name="Liao L."/>
            <person name="Kim S."/>
            <person name="Hendrick C."/>
            <person name="Zhao Z.-Y."/>
            <person name="Dolan M."/>
            <person name="Chumley F."/>
            <person name="Tingey S.V."/>
            <person name="Tomb J.-F."/>
            <person name="Gordon M.P."/>
            <person name="Olson M.V."/>
            <person name="Nester E.W."/>
        </authorList>
    </citation>
    <scope>NUCLEOTIDE SEQUENCE [LARGE SCALE GENOMIC DNA]</scope>
    <source>
        <strain>C58 / ATCC 33970</strain>
    </source>
</reference>
<reference key="2">
    <citation type="journal article" date="2001" name="Science">
        <title>Genome sequence of the plant pathogen and biotechnology agent Agrobacterium tumefaciens C58.</title>
        <authorList>
            <person name="Goodner B."/>
            <person name="Hinkle G."/>
            <person name="Gattung S."/>
            <person name="Miller N."/>
            <person name="Blanchard M."/>
            <person name="Qurollo B."/>
            <person name="Goldman B.S."/>
            <person name="Cao Y."/>
            <person name="Askenazi M."/>
            <person name="Halling C."/>
            <person name="Mullin L."/>
            <person name="Houmiel K."/>
            <person name="Gordon J."/>
            <person name="Vaudin M."/>
            <person name="Iartchouk O."/>
            <person name="Epp A."/>
            <person name="Liu F."/>
            <person name="Wollam C."/>
            <person name="Allinger M."/>
            <person name="Doughty D."/>
            <person name="Scott C."/>
            <person name="Lappas C."/>
            <person name="Markelz B."/>
            <person name="Flanagan C."/>
            <person name="Crowell C."/>
            <person name="Gurson J."/>
            <person name="Lomo C."/>
            <person name="Sear C."/>
            <person name="Strub G."/>
            <person name="Cielo C."/>
            <person name="Slater S."/>
        </authorList>
    </citation>
    <scope>NUCLEOTIDE SEQUENCE [LARGE SCALE GENOMIC DNA]</scope>
    <source>
        <strain>C58 / ATCC 33970</strain>
    </source>
</reference>
<dbReference type="EMBL" id="AE007869">
    <property type="protein sequence ID" value="AAK87838.2"/>
    <property type="molecule type" value="Genomic_DNA"/>
</dbReference>
<dbReference type="RefSeq" id="NP_355053.2">
    <property type="nucleotide sequence ID" value="NC_003062.2"/>
</dbReference>
<dbReference type="SMR" id="A9CIB0"/>
<dbReference type="STRING" id="176299.Atu2088"/>
<dbReference type="EnsemblBacteria" id="AAK87838">
    <property type="protein sequence ID" value="AAK87838"/>
    <property type="gene ID" value="Atu2088"/>
</dbReference>
<dbReference type="KEGG" id="atu:Atu2088"/>
<dbReference type="PATRIC" id="fig|176299.10.peg.2101"/>
<dbReference type="eggNOG" id="COG1589">
    <property type="taxonomic scope" value="Bacteria"/>
</dbReference>
<dbReference type="HOGENOM" id="CLU_061141_2_0_5"/>
<dbReference type="OrthoDB" id="9783091at2"/>
<dbReference type="PhylomeDB" id="A9CIB0"/>
<dbReference type="Proteomes" id="UP000000813">
    <property type="component" value="Chromosome circular"/>
</dbReference>
<dbReference type="GO" id="GO:0032153">
    <property type="term" value="C:cell division site"/>
    <property type="evidence" value="ECO:0007669"/>
    <property type="project" value="UniProtKB-UniRule"/>
</dbReference>
<dbReference type="GO" id="GO:0005886">
    <property type="term" value="C:plasma membrane"/>
    <property type="evidence" value="ECO:0007669"/>
    <property type="project" value="UniProtKB-SubCell"/>
</dbReference>
<dbReference type="GO" id="GO:0090529">
    <property type="term" value="P:cell septum assembly"/>
    <property type="evidence" value="ECO:0007669"/>
    <property type="project" value="InterPro"/>
</dbReference>
<dbReference type="GO" id="GO:0043093">
    <property type="term" value="P:FtsZ-dependent cytokinesis"/>
    <property type="evidence" value="ECO:0007669"/>
    <property type="project" value="UniProtKB-UniRule"/>
</dbReference>
<dbReference type="Gene3D" id="3.40.50.11690">
    <property type="entry name" value="Cell division protein FtsQ/DivIB"/>
    <property type="match status" value="1"/>
</dbReference>
<dbReference type="Gene3D" id="3.10.20.310">
    <property type="entry name" value="membrane protein fhac"/>
    <property type="match status" value="1"/>
</dbReference>
<dbReference type="HAMAP" id="MF_00911">
    <property type="entry name" value="FtsQ_subfam"/>
    <property type="match status" value="1"/>
</dbReference>
<dbReference type="InterPro" id="IPR005548">
    <property type="entry name" value="Cell_div_FtsQ/DivIB_C"/>
</dbReference>
<dbReference type="InterPro" id="IPR026579">
    <property type="entry name" value="FtsQ"/>
</dbReference>
<dbReference type="InterPro" id="IPR045335">
    <property type="entry name" value="FtsQ_C_sf"/>
</dbReference>
<dbReference type="InterPro" id="IPR034746">
    <property type="entry name" value="POTRA"/>
</dbReference>
<dbReference type="InterPro" id="IPR013685">
    <property type="entry name" value="POTRA_FtsQ_type"/>
</dbReference>
<dbReference type="PANTHER" id="PTHR35851">
    <property type="entry name" value="CELL DIVISION PROTEIN FTSQ"/>
    <property type="match status" value="1"/>
</dbReference>
<dbReference type="PANTHER" id="PTHR35851:SF1">
    <property type="entry name" value="CELL DIVISION PROTEIN FTSQ"/>
    <property type="match status" value="1"/>
</dbReference>
<dbReference type="Pfam" id="PF03799">
    <property type="entry name" value="FtsQ_DivIB_C"/>
    <property type="match status" value="1"/>
</dbReference>
<dbReference type="Pfam" id="PF08478">
    <property type="entry name" value="POTRA_1"/>
    <property type="match status" value="1"/>
</dbReference>
<dbReference type="PROSITE" id="PS51779">
    <property type="entry name" value="POTRA"/>
    <property type="match status" value="1"/>
</dbReference>
<sequence>MDGGGRFVFAVTGKKSTAKKREQYAATANADDRRVLPRPLRRFVRFGVSLATGRIHIPAHTGTISAVAFYAMIGLYGMSLGGHTNIVTQTTTSAAGFAVEDVKVSGNLQTSEIEVFQLLGLDGSTSLIALDIDAARRKLVQLPWVEDVDIRKVYPKTVEVRLKERQAFGIWQHGTELSLIEKSGSVIAPLRDNKFAALPLFVGRDAETGAAGFVAQLADWPEIRNRVRAYVRIAGRRWDLHLDNGIVVKLPEENLPQALQLLARLDLEEKVLSRDVAAVDLRLTDRTTIQLTEGAAERRQTAVDARTKALKKAEKNT</sequence>
<comment type="function">
    <text evidence="1">Essential cell division protein.</text>
</comment>
<comment type="subcellular location">
    <subcellularLocation>
        <location evidence="1">Cell inner membrane</location>
        <topology evidence="1">Single-pass type II membrane protein</topology>
    </subcellularLocation>
    <text evidence="1">Localizes to the division septum.</text>
</comment>
<comment type="similarity">
    <text evidence="1">Belongs to the FtsQ/DivIB family. FtsQ subfamily.</text>
</comment>
<name>FTSQ_AGRFC</name>